<dbReference type="EMBL" id="EF683107">
    <property type="protein sequence ID" value="ABV48895.1"/>
    <property type="status" value="ALT_FRAME"/>
    <property type="molecule type" value="Genomic_DNA"/>
</dbReference>
<dbReference type="EMBL" id="KB908971">
    <property type="protein sequence ID" value="EOB13707.1"/>
    <property type="molecule type" value="Genomic_DNA"/>
</dbReference>
<dbReference type="SMR" id="B3STP1"/>
<dbReference type="EnsemblFungi" id="EOB13707">
    <property type="protein sequence ID" value="EOB13707"/>
    <property type="gene ID" value="NBO_63g0026"/>
</dbReference>
<dbReference type="VEuPathDB" id="MicrosporidiaDB:NBO_63g0026"/>
<dbReference type="HOGENOM" id="CLU_970085_0_0_1"/>
<dbReference type="OMA" id="GLHLFVW"/>
<dbReference type="OrthoDB" id="2187049at2759"/>
<dbReference type="Proteomes" id="UP000016927">
    <property type="component" value="Unassembled WGS sequence"/>
</dbReference>
<dbReference type="GO" id="GO:0005737">
    <property type="term" value="C:cytoplasm"/>
    <property type="evidence" value="ECO:0000314"/>
    <property type="project" value="UniProtKB"/>
</dbReference>
<dbReference type="GO" id="GO:0044099">
    <property type="term" value="C:polar tube"/>
    <property type="evidence" value="ECO:0000314"/>
    <property type="project" value="UniProtKB"/>
</dbReference>
<dbReference type="GO" id="GO:0031160">
    <property type="term" value="C:spore wall"/>
    <property type="evidence" value="ECO:0000314"/>
    <property type="project" value="UniProtKB"/>
</dbReference>
<dbReference type="GO" id="GO:0075004">
    <property type="term" value="P:adhesion of symbiont spore to host"/>
    <property type="evidence" value="ECO:0000314"/>
    <property type="project" value="CACAO"/>
</dbReference>
<dbReference type="GO" id="GO:0007155">
    <property type="term" value="P:cell adhesion"/>
    <property type="evidence" value="ECO:0007669"/>
    <property type="project" value="UniProtKB-KW"/>
</dbReference>
<sequence length="287" mass="32329">MIKGLIYLFLFRCLEGRLADYEEESSDLGDYSLNGQTDEEYGKFPSHVLTEKETGPMDEIRCTNDDYTYNIKLNVHLQNYAIQAIADAAKPKLGMNLKERDAILSYFGTIANELNADLARLGAQIVIGLKHYKAEDFIDTNSFDTSCEIRDPVMDRLDSTFKQLKDVYQDSMGLRLFVWTCPQLTSSFETMKIMSNLNCGRIMGVLWQGADATRTSIKSTILEAISGVSELYLDGALPVDRVFSNVCRFCSKCVGVEPGVIGWKHPDVVKLIHAIPEEDTHEHGYDH</sequence>
<proteinExistence type="evidence at protein level"/>
<evidence type="ECO:0000255" key="1"/>
<evidence type="ECO:0000269" key="2">
    <source>
    </source>
</evidence>
<evidence type="ECO:0000269" key="3">
    <source>
    </source>
</evidence>
<evidence type="ECO:0000305" key="4"/>
<accession>B3STP1</accession>
<accession>R0KTZ9</accession>
<name>SWP7_NOSB1</name>
<feature type="signal peptide" evidence="1">
    <location>
        <begin position="1"/>
        <end position="19"/>
    </location>
</feature>
<feature type="chain" id="PRO_0000382916" description="Spore wall protein 7">
    <location>
        <begin position="20"/>
        <end position="287"/>
    </location>
</feature>
<protein>
    <recommendedName>
        <fullName>Spore wall protein 7</fullName>
    </recommendedName>
</protein>
<reference key="1">
    <citation type="journal article" date="2008" name="Proteomics">
        <title>Proteomic analysis of spore wall proteins and identification of two spore wall proteins from Nosema bombycis (Microsporidia).</title>
        <authorList>
            <person name="Wu Z."/>
            <person name="Li Y."/>
            <person name="Pan G."/>
            <person name="Tan X."/>
            <person name="Hu J."/>
            <person name="Zhou Z."/>
            <person name="Xiang Z."/>
        </authorList>
    </citation>
    <scope>NUCLEOTIDE SEQUENCE [GENOMIC DNA]</scope>
    <scope>IDENTIFICATION BY MASS SPECTROMETRY</scope>
    <scope>SUBCELLULAR LOCATION</scope>
    <source>
        <strain>CQ1 / CVCC 102059</strain>
    </source>
</reference>
<reference key="2">
    <citation type="journal article" date="2013" name="BMC Genomics">
        <title>Comparative genomics of parasitic silkworm microsporidia reveal an association between genome expansion and host adaptation.</title>
        <authorList>
            <person name="Pan G."/>
            <person name="Xu J."/>
            <person name="Li T."/>
            <person name="Xia Q."/>
            <person name="Liu S.L."/>
            <person name="Zhang G."/>
            <person name="Li S."/>
            <person name="Li C."/>
            <person name="Liu H."/>
            <person name="Yang L."/>
            <person name="Liu T."/>
            <person name="Zhang X."/>
            <person name="Wu Z."/>
            <person name="Fan W."/>
            <person name="Dang X."/>
            <person name="Xiang H."/>
            <person name="Tao M."/>
            <person name="Li Y."/>
            <person name="Hu J."/>
            <person name="Li Z."/>
            <person name="Lin L."/>
            <person name="Luo J."/>
            <person name="Geng L."/>
            <person name="Wang L."/>
            <person name="Long M."/>
            <person name="Wan Y."/>
            <person name="He N."/>
            <person name="Zhang Z."/>
            <person name="Lu C."/>
            <person name="Keeling P.J."/>
            <person name="Wang J."/>
            <person name="Xiang Z."/>
            <person name="Zhou Z."/>
        </authorList>
    </citation>
    <scope>NUCLEOTIDE SEQUENCE [LARGE SCALE GENOMIC DNA]</scope>
    <source>
        <strain>CQ1 / CVCC 102059</strain>
    </source>
</reference>
<reference key="3">
    <citation type="journal article" date="2015" name="Infect. Immun.">
        <title>Interaction and assembly of two novel proteins in the spore wall of the microsporidian species Nosema bombycis and their roles in adherence to and infection of host cells.</title>
        <authorList>
            <person name="Yang D."/>
            <person name="Pan G."/>
            <person name="Dang X."/>
            <person name="Shi Y."/>
            <person name="Li C."/>
            <person name="Peng P."/>
            <person name="Luo B."/>
            <person name="Bian M."/>
            <person name="Song Y."/>
            <person name="Ma C."/>
            <person name="Chen J."/>
            <person name="Ma Z."/>
            <person name="Geng L."/>
            <person name="Li Z."/>
            <person name="Tian R."/>
            <person name="Wei C."/>
            <person name="Zhou Z."/>
        </authorList>
    </citation>
    <scope>FUNCTION</scope>
    <scope>INTERACTION WITH SWP9</scope>
    <scope>SUBCELLULAR LOCATION</scope>
    <scope>DEVELOPMENTAL STAGE</scope>
    <source>
        <strain>CQ1 / CVCC 102059</strain>
    </source>
</reference>
<organism>
    <name type="scientific">Nosema bombycis (strain CQ1 / CVCC 102059)</name>
    <name type="common">Microsporidian parasite</name>
    <name type="synonym">Pebrine of silkworm</name>
    <dbReference type="NCBI Taxonomy" id="578461"/>
    <lineage>
        <taxon>Eukaryota</taxon>
        <taxon>Fungi</taxon>
        <taxon>Fungi incertae sedis</taxon>
        <taxon>Microsporidia</taxon>
        <taxon>Nosematidae</taxon>
        <taxon>Nosema</taxon>
    </lineage>
</organism>
<keyword id="KW-0130">Cell adhesion</keyword>
<keyword id="KW-0963">Cytoplasm</keyword>
<keyword id="KW-1185">Reference proteome</keyword>
<keyword id="KW-0732">Signal</keyword>
<gene>
    <name type="primary">SWP7</name>
    <name type="synonym">HSWP7</name>
    <name type="ORF">NBO_63g0026</name>
</gene>
<comment type="function">
    <text evidence="3">Involved in adherence of spores to the host cell surface and in infection efficiency.</text>
</comment>
<comment type="subunit">
    <text evidence="3">Interacts with SWP9.</text>
</comment>
<comment type="subcellular location">
    <subcellularLocation>
        <location evidence="3">Cytoplasm</location>
    </subcellularLocation>
    <subcellularLocation>
        <location evidence="2 3">Spore wall</location>
    </subcellularLocation>
    <subcellularLocation>
        <location evidence="3">Spore polar tube</location>
    </subcellularLocation>
    <text evidence="3">Localized to the cytoplasm of sporonts and sporoblasts and to the spore wall and polar tube of mature spores.</text>
</comment>
<comment type="developmental stage">
    <text evidence="3">Expressed at all developmental stages.</text>
</comment>
<comment type="similarity">
    <text evidence="4">Belongs to the SWP7 family.</text>
</comment>
<comment type="sequence caution" evidence="4">
    <conflict type="frameshift">
        <sequence resource="EMBL-CDS" id="ABV48895"/>
    </conflict>
</comment>